<reference key="1">
    <citation type="journal article" date="2004" name="Proc. Natl. Acad. Sci. U.S.A.">
        <title>Complete genomes of two clinical Staphylococcus aureus strains: evidence for the rapid evolution of virulence and drug resistance.</title>
        <authorList>
            <person name="Holden M.T.G."/>
            <person name="Feil E.J."/>
            <person name="Lindsay J.A."/>
            <person name="Peacock S.J."/>
            <person name="Day N.P.J."/>
            <person name="Enright M.C."/>
            <person name="Foster T.J."/>
            <person name="Moore C.E."/>
            <person name="Hurst L."/>
            <person name="Atkin R."/>
            <person name="Barron A."/>
            <person name="Bason N."/>
            <person name="Bentley S.D."/>
            <person name="Chillingworth C."/>
            <person name="Chillingworth T."/>
            <person name="Churcher C."/>
            <person name="Clark L."/>
            <person name="Corton C."/>
            <person name="Cronin A."/>
            <person name="Doggett J."/>
            <person name="Dowd L."/>
            <person name="Feltwell T."/>
            <person name="Hance Z."/>
            <person name="Harris B."/>
            <person name="Hauser H."/>
            <person name="Holroyd S."/>
            <person name="Jagels K."/>
            <person name="James K.D."/>
            <person name="Lennard N."/>
            <person name="Line A."/>
            <person name="Mayes R."/>
            <person name="Moule S."/>
            <person name="Mungall K."/>
            <person name="Ormond D."/>
            <person name="Quail M.A."/>
            <person name="Rabbinowitsch E."/>
            <person name="Rutherford K.M."/>
            <person name="Sanders M."/>
            <person name="Sharp S."/>
            <person name="Simmonds M."/>
            <person name="Stevens K."/>
            <person name="Whitehead S."/>
            <person name="Barrell B.G."/>
            <person name="Spratt B.G."/>
            <person name="Parkhill J."/>
        </authorList>
    </citation>
    <scope>NUCLEOTIDE SEQUENCE [LARGE SCALE GENOMIC DNA]</scope>
    <source>
        <strain>MSSA476</strain>
    </source>
</reference>
<protein>
    <recommendedName>
        <fullName evidence="1">Methylenetetrahydrofolate--tRNA-(uracil-5-)-methyltransferase TrmFO</fullName>
        <ecNumber evidence="1">2.1.1.74</ecNumber>
    </recommendedName>
    <alternativeName>
        <fullName evidence="1">Folate-dependent tRNA (uracil-5-)-methyltransferase</fullName>
    </alternativeName>
    <alternativeName>
        <fullName evidence="1">Folate-dependent tRNA(M-5-U54)-methyltransferase</fullName>
    </alternativeName>
</protein>
<name>TRMFO_STAAS</name>
<comment type="function">
    <text evidence="1">Catalyzes the folate-dependent formation of 5-methyl-uridine at position 54 (M-5-U54) in all tRNAs.</text>
</comment>
<comment type="catalytic activity">
    <reaction evidence="1">
        <text>uridine(54) in tRNA + (6R)-5,10-methylene-5,6,7,8-tetrahydrofolate + NADH + H(+) = 5-methyluridine(54) in tRNA + (6S)-5,6,7,8-tetrahydrofolate + NAD(+)</text>
        <dbReference type="Rhea" id="RHEA:16873"/>
        <dbReference type="Rhea" id="RHEA-COMP:10167"/>
        <dbReference type="Rhea" id="RHEA-COMP:10193"/>
        <dbReference type="ChEBI" id="CHEBI:15378"/>
        <dbReference type="ChEBI" id="CHEBI:15636"/>
        <dbReference type="ChEBI" id="CHEBI:57453"/>
        <dbReference type="ChEBI" id="CHEBI:57540"/>
        <dbReference type="ChEBI" id="CHEBI:57945"/>
        <dbReference type="ChEBI" id="CHEBI:65315"/>
        <dbReference type="ChEBI" id="CHEBI:74447"/>
        <dbReference type="EC" id="2.1.1.74"/>
    </reaction>
</comment>
<comment type="catalytic activity">
    <reaction evidence="1">
        <text>uridine(54) in tRNA + (6R)-5,10-methylene-5,6,7,8-tetrahydrofolate + NADPH + H(+) = 5-methyluridine(54) in tRNA + (6S)-5,6,7,8-tetrahydrofolate + NADP(+)</text>
        <dbReference type="Rhea" id="RHEA:62372"/>
        <dbReference type="Rhea" id="RHEA-COMP:10167"/>
        <dbReference type="Rhea" id="RHEA-COMP:10193"/>
        <dbReference type="ChEBI" id="CHEBI:15378"/>
        <dbReference type="ChEBI" id="CHEBI:15636"/>
        <dbReference type="ChEBI" id="CHEBI:57453"/>
        <dbReference type="ChEBI" id="CHEBI:57783"/>
        <dbReference type="ChEBI" id="CHEBI:58349"/>
        <dbReference type="ChEBI" id="CHEBI:65315"/>
        <dbReference type="ChEBI" id="CHEBI:74447"/>
        <dbReference type="EC" id="2.1.1.74"/>
    </reaction>
</comment>
<comment type="cofactor">
    <cofactor evidence="1">
        <name>FAD</name>
        <dbReference type="ChEBI" id="CHEBI:57692"/>
    </cofactor>
</comment>
<comment type="subcellular location">
    <subcellularLocation>
        <location evidence="1">Cytoplasm</location>
    </subcellularLocation>
</comment>
<comment type="similarity">
    <text evidence="1">Belongs to the MnmG family. TrmFO subfamily.</text>
</comment>
<proteinExistence type="inferred from homology"/>
<evidence type="ECO:0000255" key="1">
    <source>
        <dbReference type="HAMAP-Rule" id="MF_01037"/>
    </source>
</evidence>
<accession>Q6G9W2</accession>
<sequence>MTQTVNVIGAGLAGSEAAYQLAERGIKVNLIEMRPVKQTPAHHTDKFAELVCSNSLRGNALTNGVGVLKEEMRRLNSIIIEAADKARVPAGGALAVDRHDFSGYITETLKNHENITVINEEINAIPDGYTIIATGPLTTETLAQEIVDITGKDQLYFYDAAAPIIEKESIDMDKVYLKSRYDKGEAAYLNCPMTEDEFNRFYDAVLEAEVAPVNSFEKEKYFEGCMPFEVMAERGRKTLLFGPMKPVGLEDPKTGKRPYAVVQLRQDDAAGTLYNIVGFQTHLKWGAQKEVIKLIPGLENVDIVRYGVMHRNTFINSPDVLNEKYELISQPNIQFAGQMTGVEGYVESAASGLVAGINLAHKILGKGEVVFPRETMIGSMAYYISHAKNNKNFQPMNANFGLLPSLETRIKDKKERYEAQANRALDYLENFKKTL</sequence>
<feature type="chain" id="PRO_0000117261" description="Methylenetetrahydrofolate--tRNA-(uracil-5-)-methyltransferase TrmFO">
    <location>
        <begin position="1"/>
        <end position="435"/>
    </location>
</feature>
<feature type="binding site" evidence="1">
    <location>
        <begin position="9"/>
        <end position="14"/>
    </location>
    <ligand>
        <name>FAD</name>
        <dbReference type="ChEBI" id="CHEBI:57692"/>
    </ligand>
</feature>
<gene>
    <name evidence="1" type="primary">trmFO</name>
    <name type="synonym">gid</name>
    <name type="ordered locus">SAS1185</name>
</gene>
<organism>
    <name type="scientific">Staphylococcus aureus (strain MSSA476)</name>
    <dbReference type="NCBI Taxonomy" id="282459"/>
    <lineage>
        <taxon>Bacteria</taxon>
        <taxon>Bacillati</taxon>
        <taxon>Bacillota</taxon>
        <taxon>Bacilli</taxon>
        <taxon>Bacillales</taxon>
        <taxon>Staphylococcaceae</taxon>
        <taxon>Staphylococcus</taxon>
    </lineage>
</organism>
<keyword id="KW-0963">Cytoplasm</keyword>
<keyword id="KW-0274">FAD</keyword>
<keyword id="KW-0285">Flavoprotein</keyword>
<keyword id="KW-0489">Methyltransferase</keyword>
<keyword id="KW-0520">NAD</keyword>
<keyword id="KW-0521">NADP</keyword>
<keyword id="KW-0808">Transferase</keyword>
<keyword id="KW-0819">tRNA processing</keyword>
<dbReference type="EC" id="2.1.1.74" evidence="1"/>
<dbReference type="EMBL" id="BX571857">
    <property type="protein sequence ID" value="CAG42962.1"/>
    <property type="molecule type" value="Genomic_DNA"/>
</dbReference>
<dbReference type="RefSeq" id="WP_000195254.1">
    <property type="nucleotide sequence ID" value="NC_002953.3"/>
</dbReference>
<dbReference type="SMR" id="Q6G9W2"/>
<dbReference type="KEGG" id="sas:SAS1185"/>
<dbReference type="HOGENOM" id="CLU_033057_1_0_9"/>
<dbReference type="GO" id="GO:0005829">
    <property type="term" value="C:cytosol"/>
    <property type="evidence" value="ECO:0007669"/>
    <property type="project" value="TreeGrafter"/>
</dbReference>
<dbReference type="GO" id="GO:0050660">
    <property type="term" value="F:flavin adenine dinucleotide binding"/>
    <property type="evidence" value="ECO:0007669"/>
    <property type="project" value="UniProtKB-UniRule"/>
</dbReference>
<dbReference type="GO" id="GO:0047151">
    <property type="term" value="F:tRNA (uracil(54)-C5)-methyltransferase activity, 5,10-methylenetetrahydrofolate-dependent"/>
    <property type="evidence" value="ECO:0007669"/>
    <property type="project" value="UniProtKB-UniRule"/>
</dbReference>
<dbReference type="GO" id="GO:0030488">
    <property type="term" value="P:tRNA methylation"/>
    <property type="evidence" value="ECO:0007669"/>
    <property type="project" value="TreeGrafter"/>
</dbReference>
<dbReference type="GO" id="GO:0002098">
    <property type="term" value="P:tRNA wobble uridine modification"/>
    <property type="evidence" value="ECO:0007669"/>
    <property type="project" value="TreeGrafter"/>
</dbReference>
<dbReference type="FunFam" id="3.50.50.60:FF:000035">
    <property type="entry name" value="Methylenetetrahydrofolate--tRNA-(uracil-5-)-methyltransferase TrmFO"/>
    <property type="match status" value="1"/>
</dbReference>
<dbReference type="FunFam" id="3.50.50.60:FF:000040">
    <property type="entry name" value="Methylenetetrahydrofolate--tRNA-(uracil-5-)-methyltransferase TrmFO"/>
    <property type="match status" value="1"/>
</dbReference>
<dbReference type="Gene3D" id="3.50.50.60">
    <property type="entry name" value="FAD/NAD(P)-binding domain"/>
    <property type="match status" value="2"/>
</dbReference>
<dbReference type="HAMAP" id="MF_01037">
    <property type="entry name" value="TrmFO"/>
    <property type="match status" value="1"/>
</dbReference>
<dbReference type="InterPro" id="IPR036188">
    <property type="entry name" value="FAD/NAD-bd_sf"/>
</dbReference>
<dbReference type="InterPro" id="IPR002218">
    <property type="entry name" value="MnmG-rel"/>
</dbReference>
<dbReference type="InterPro" id="IPR020595">
    <property type="entry name" value="MnmG-rel_CS"/>
</dbReference>
<dbReference type="InterPro" id="IPR040131">
    <property type="entry name" value="MnmG_N"/>
</dbReference>
<dbReference type="InterPro" id="IPR004417">
    <property type="entry name" value="TrmFO"/>
</dbReference>
<dbReference type="NCBIfam" id="TIGR00137">
    <property type="entry name" value="gid_trmFO"/>
    <property type="match status" value="1"/>
</dbReference>
<dbReference type="NCBIfam" id="NF003739">
    <property type="entry name" value="PRK05335.1"/>
    <property type="match status" value="1"/>
</dbReference>
<dbReference type="PANTHER" id="PTHR11806">
    <property type="entry name" value="GLUCOSE INHIBITED DIVISION PROTEIN A"/>
    <property type="match status" value="1"/>
</dbReference>
<dbReference type="PANTHER" id="PTHR11806:SF2">
    <property type="entry name" value="METHYLENETETRAHYDROFOLATE--TRNA-(URACIL-5-)-METHYLTRANSFERASE TRMFO"/>
    <property type="match status" value="1"/>
</dbReference>
<dbReference type="Pfam" id="PF01134">
    <property type="entry name" value="GIDA"/>
    <property type="match status" value="1"/>
</dbReference>
<dbReference type="SUPFAM" id="SSF51905">
    <property type="entry name" value="FAD/NAD(P)-binding domain"/>
    <property type="match status" value="1"/>
</dbReference>
<dbReference type="PROSITE" id="PS01281">
    <property type="entry name" value="GIDA_2"/>
    <property type="match status" value="1"/>
</dbReference>